<organism>
    <name type="scientific">Thermobifida fusca (strain YX)</name>
    <dbReference type="NCBI Taxonomy" id="269800"/>
    <lineage>
        <taxon>Bacteria</taxon>
        <taxon>Bacillati</taxon>
        <taxon>Actinomycetota</taxon>
        <taxon>Actinomycetes</taxon>
        <taxon>Streptosporangiales</taxon>
        <taxon>Nocardiopsidaceae</taxon>
        <taxon>Thermobifida</taxon>
    </lineage>
</organism>
<reference key="1">
    <citation type="journal article" date="2007" name="J. Bacteriol.">
        <title>Genome sequence and analysis of the soil cellulolytic actinomycete Thermobifida fusca YX.</title>
        <authorList>
            <person name="Lykidis A."/>
            <person name="Mavromatis K."/>
            <person name="Ivanova N."/>
            <person name="Anderson I."/>
            <person name="Land M."/>
            <person name="DiBartolo G."/>
            <person name="Martinez M."/>
            <person name="Lapidus A."/>
            <person name="Lucas S."/>
            <person name="Copeland A."/>
            <person name="Richardson P."/>
            <person name="Wilson D.B."/>
            <person name="Kyrpides N."/>
        </authorList>
    </citation>
    <scope>NUCLEOTIDE SEQUENCE [LARGE SCALE GENOMIC DNA]</scope>
    <source>
        <strain>YX</strain>
    </source>
</reference>
<comment type="function">
    <text evidence="1">Required for rescue of stalled ribosomes mediated by trans-translation. Binds to transfer-messenger RNA (tmRNA), required for stable association of tmRNA with ribosomes. tmRNA and SmpB together mimic tRNA shape, replacing the anticodon stem-loop with SmpB. tmRNA is encoded by the ssrA gene; the 2 termini fold to resemble tRNA(Ala) and it encodes a 'tag peptide', a short internal open reading frame. During trans-translation Ala-aminoacylated tmRNA acts like a tRNA, entering the A-site of stalled ribosomes, displacing the stalled mRNA. The ribosome then switches to translate the ORF on the tmRNA; the nascent peptide is terminated with the 'tag peptide' encoded by the tmRNA and targeted for degradation. The ribosome is freed to recommence translation, which seems to be the essential function of trans-translation.</text>
</comment>
<comment type="subcellular location">
    <subcellularLocation>
        <location evidence="1">Cytoplasm</location>
    </subcellularLocation>
    <text evidence="1">The tmRNA-SmpB complex associates with stalled 70S ribosomes.</text>
</comment>
<comment type="similarity">
    <text evidence="1">Belongs to the SmpB family.</text>
</comment>
<protein>
    <recommendedName>
        <fullName evidence="1">SsrA-binding protein</fullName>
    </recommendedName>
    <alternativeName>
        <fullName evidence="1">Small protein B</fullName>
    </alternativeName>
</protein>
<keyword id="KW-0963">Cytoplasm</keyword>
<keyword id="KW-0694">RNA-binding</keyword>
<dbReference type="EMBL" id="CP000088">
    <property type="protein sequence ID" value="AAZ56509.1"/>
    <property type="molecule type" value="Genomic_DNA"/>
</dbReference>
<dbReference type="RefSeq" id="WP_011292899.1">
    <property type="nucleotide sequence ID" value="NC_007333.1"/>
</dbReference>
<dbReference type="SMR" id="Q47M13"/>
<dbReference type="STRING" id="269800.Tfu_2476"/>
<dbReference type="KEGG" id="tfu:Tfu_2476"/>
<dbReference type="eggNOG" id="COG0691">
    <property type="taxonomic scope" value="Bacteria"/>
</dbReference>
<dbReference type="HOGENOM" id="CLU_108953_2_1_11"/>
<dbReference type="OrthoDB" id="9805462at2"/>
<dbReference type="GO" id="GO:0005829">
    <property type="term" value="C:cytosol"/>
    <property type="evidence" value="ECO:0007669"/>
    <property type="project" value="TreeGrafter"/>
</dbReference>
<dbReference type="GO" id="GO:0003723">
    <property type="term" value="F:RNA binding"/>
    <property type="evidence" value="ECO:0007669"/>
    <property type="project" value="UniProtKB-UniRule"/>
</dbReference>
<dbReference type="GO" id="GO:0070929">
    <property type="term" value="P:trans-translation"/>
    <property type="evidence" value="ECO:0007669"/>
    <property type="project" value="UniProtKB-UniRule"/>
</dbReference>
<dbReference type="CDD" id="cd09294">
    <property type="entry name" value="SmpB"/>
    <property type="match status" value="1"/>
</dbReference>
<dbReference type="Gene3D" id="2.40.280.10">
    <property type="match status" value="1"/>
</dbReference>
<dbReference type="HAMAP" id="MF_00023">
    <property type="entry name" value="SmpB"/>
    <property type="match status" value="1"/>
</dbReference>
<dbReference type="InterPro" id="IPR023620">
    <property type="entry name" value="SmpB"/>
</dbReference>
<dbReference type="InterPro" id="IPR000037">
    <property type="entry name" value="SsrA-bd_prot"/>
</dbReference>
<dbReference type="InterPro" id="IPR020081">
    <property type="entry name" value="SsrA-bd_prot_CS"/>
</dbReference>
<dbReference type="NCBIfam" id="NF003843">
    <property type="entry name" value="PRK05422.1"/>
    <property type="match status" value="1"/>
</dbReference>
<dbReference type="NCBIfam" id="TIGR00086">
    <property type="entry name" value="smpB"/>
    <property type="match status" value="1"/>
</dbReference>
<dbReference type="PANTHER" id="PTHR30308:SF2">
    <property type="entry name" value="SSRA-BINDING PROTEIN"/>
    <property type="match status" value="1"/>
</dbReference>
<dbReference type="PANTHER" id="PTHR30308">
    <property type="entry name" value="TMRNA-BINDING COMPONENT OF TRANS-TRANSLATION TAGGING COMPLEX"/>
    <property type="match status" value="1"/>
</dbReference>
<dbReference type="Pfam" id="PF01668">
    <property type="entry name" value="SmpB"/>
    <property type="match status" value="1"/>
</dbReference>
<dbReference type="SUPFAM" id="SSF74982">
    <property type="entry name" value="Small protein B (SmpB)"/>
    <property type="match status" value="1"/>
</dbReference>
<dbReference type="PROSITE" id="PS01317">
    <property type="entry name" value="SSRP"/>
    <property type="match status" value="1"/>
</dbReference>
<gene>
    <name evidence="1" type="primary">smpB</name>
    <name type="ordered locus">Tfu_2476</name>
</gene>
<sequence length="160" mass="18656">MARKKKQDKGQGPKTIAQNRRARHDYHIEDTYEAGLVLTGTEVKSLRAGRASLVDGFAQIKNGEVWLHNVHIPEYTMGTWTNHAPRRPRKLLLHREEIAKLDAKTREAGRTLVPLSLYFRNGRAKVEIALARGKREYDKRHDIAEREAKREMERALRRRR</sequence>
<name>SSRP_THEFY</name>
<accession>Q47M13</accession>
<proteinExistence type="inferred from homology"/>
<evidence type="ECO:0000255" key="1">
    <source>
        <dbReference type="HAMAP-Rule" id="MF_00023"/>
    </source>
</evidence>
<evidence type="ECO:0000256" key="2">
    <source>
        <dbReference type="SAM" id="MobiDB-lite"/>
    </source>
</evidence>
<feature type="chain" id="PRO_0000331107" description="SsrA-binding protein">
    <location>
        <begin position="1"/>
        <end position="160"/>
    </location>
</feature>
<feature type="region of interest" description="Disordered" evidence="2">
    <location>
        <begin position="1"/>
        <end position="23"/>
    </location>
</feature>